<evidence type="ECO:0000255" key="1">
    <source>
        <dbReference type="HAMAP-Rule" id="MF_00051"/>
    </source>
</evidence>
<organism>
    <name type="scientific">Chlamydia muridarum (strain MoPn / Nigg)</name>
    <dbReference type="NCBI Taxonomy" id="243161"/>
    <lineage>
        <taxon>Bacteria</taxon>
        <taxon>Pseudomonadati</taxon>
        <taxon>Chlamydiota</taxon>
        <taxon>Chlamydiia</taxon>
        <taxon>Chlamydiales</taxon>
        <taxon>Chlamydiaceae</taxon>
        <taxon>Chlamydia/Chlamydophila group</taxon>
        <taxon>Chlamydia</taxon>
    </lineage>
</organism>
<comment type="function">
    <text evidence="1">Catalyzes the reversible interconversion of serine and glycine with tetrahydrofolate (THF) serving as the one-carbon carrier. This reaction serves as the major source of one-carbon groups required for the biosynthesis of purines, thymidylate, methionine, and other important biomolecules. Also exhibits THF-independent aldolase activity toward beta-hydroxyamino acids, producing glycine and aldehydes, via a retro-aldol mechanism.</text>
</comment>
<comment type="catalytic activity">
    <reaction evidence="1">
        <text>(6R)-5,10-methylene-5,6,7,8-tetrahydrofolate + glycine + H2O = (6S)-5,6,7,8-tetrahydrofolate + L-serine</text>
        <dbReference type="Rhea" id="RHEA:15481"/>
        <dbReference type="ChEBI" id="CHEBI:15377"/>
        <dbReference type="ChEBI" id="CHEBI:15636"/>
        <dbReference type="ChEBI" id="CHEBI:33384"/>
        <dbReference type="ChEBI" id="CHEBI:57305"/>
        <dbReference type="ChEBI" id="CHEBI:57453"/>
        <dbReference type="EC" id="2.1.2.1"/>
    </reaction>
</comment>
<comment type="cofactor">
    <cofactor evidence="1">
        <name>pyridoxal 5'-phosphate</name>
        <dbReference type="ChEBI" id="CHEBI:597326"/>
    </cofactor>
</comment>
<comment type="pathway">
    <text evidence="1">One-carbon metabolism; tetrahydrofolate interconversion.</text>
</comment>
<comment type="pathway">
    <text evidence="1">Amino-acid biosynthesis; glycine biosynthesis; glycine from L-serine: step 1/1.</text>
</comment>
<comment type="subunit">
    <text evidence="1">Homodimer.</text>
</comment>
<comment type="subcellular location">
    <subcellularLocation>
        <location evidence="1">Cytoplasm</location>
    </subcellularLocation>
</comment>
<comment type="similarity">
    <text evidence="1">Belongs to the SHMT family.</text>
</comment>
<sequence>MTSLLDKYLRNISGKGQQSLASVAYLAALDHLLHSFPSIGQSIVQELKSQRSRLKMIASENFSSLSVQLAMGNLLTDKYCEGSPFKRFYSCCENVDAIEWECVETAKELFGAESACVQPHSGADANLLAIMSIITQKIQSPAVQRLGYKTINDLPEQEYEALKAEMSQYKCLGPSLNSGGHLTHGTVRINVMSKLMHCLPYEVNLDTELFDYDVIAKIAKEHRPTVLIAGYSSYSRRLNFATLKQIAEDCGAVLWVDMAHFAGLVAGGVFIGEENPIPYADIVTTTTHKTLRGPRGGLVLAKKEYSDTLNKACPLMMGGPLPHVIAAKAVALKEAMTINFRKYAHQVVENARTLAEIFQRNGLRLLTGGTDNHMLIIDLTSLGVPGRIAEDMLTSVGIAVNRNSIPSDASGQWKTSGIRLGTPALTTLGMGSAEMEEVANIIAKVLRNITVRRNAEGSSSKSEGVLSEEIAQEARQRVADLLGRFPLYPEIDLETLV</sequence>
<dbReference type="EC" id="2.1.2.1" evidence="1"/>
<dbReference type="EMBL" id="AE002160">
    <property type="protein sequence ID" value="AAF39528.1"/>
    <property type="molecule type" value="Genomic_DNA"/>
</dbReference>
<dbReference type="PIR" id="C81672">
    <property type="entry name" value="C81672"/>
</dbReference>
<dbReference type="RefSeq" id="WP_010231307.1">
    <property type="nucleotide sequence ID" value="NZ_CP063055.1"/>
</dbReference>
<dbReference type="SMR" id="Q9PJW0"/>
<dbReference type="GeneID" id="1246079"/>
<dbReference type="KEGG" id="cmu:TC_0716"/>
<dbReference type="eggNOG" id="COG0112">
    <property type="taxonomic scope" value="Bacteria"/>
</dbReference>
<dbReference type="HOGENOM" id="CLU_022477_2_1_0"/>
<dbReference type="OrthoDB" id="9803846at2"/>
<dbReference type="UniPathway" id="UPA00193"/>
<dbReference type="UniPathway" id="UPA00288">
    <property type="reaction ID" value="UER01023"/>
</dbReference>
<dbReference type="Proteomes" id="UP000000800">
    <property type="component" value="Chromosome"/>
</dbReference>
<dbReference type="GO" id="GO:0005829">
    <property type="term" value="C:cytosol"/>
    <property type="evidence" value="ECO:0007669"/>
    <property type="project" value="TreeGrafter"/>
</dbReference>
<dbReference type="GO" id="GO:0004372">
    <property type="term" value="F:glycine hydroxymethyltransferase activity"/>
    <property type="evidence" value="ECO:0007669"/>
    <property type="project" value="UniProtKB-UniRule"/>
</dbReference>
<dbReference type="GO" id="GO:0030170">
    <property type="term" value="F:pyridoxal phosphate binding"/>
    <property type="evidence" value="ECO:0007669"/>
    <property type="project" value="UniProtKB-UniRule"/>
</dbReference>
<dbReference type="GO" id="GO:0019264">
    <property type="term" value="P:glycine biosynthetic process from serine"/>
    <property type="evidence" value="ECO:0007669"/>
    <property type="project" value="UniProtKB-UniRule"/>
</dbReference>
<dbReference type="GO" id="GO:0035999">
    <property type="term" value="P:tetrahydrofolate interconversion"/>
    <property type="evidence" value="ECO:0007669"/>
    <property type="project" value="UniProtKB-UniRule"/>
</dbReference>
<dbReference type="CDD" id="cd00378">
    <property type="entry name" value="SHMT"/>
    <property type="match status" value="1"/>
</dbReference>
<dbReference type="FunFam" id="3.40.640.10:FF:000060">
    <property type="entry name" value="Serine hydroxymethyltransferase"/>
    <property type="match status" value="1"/>
</dbReference>
<dbReference type="Gene3D" id="3.90.1150.10">
    <property type="entry name" value="Aspartate Aminotransferase, domain 1"/>
    <property type="match status" value="1"/>
</dbReference>
<dbReference type="Gene3D" id="3.40.640.10">
    <property type="entry name" value="Type I PLP-dependent aspartate aminotransferase-like (Major domain)"/>
    <property type="match status" value="1"/>
</dbReference>
<dbReference type="HAMAP" id="MF_00051">
    <property type="entry name" value="SHMT"/>
    <property type="match status" value="1"/>
</dbReference>
<dbReference type="InterPro" id="IPR015424">
    <property type="entry name" value="PyrdxlP-dep_Trfase"/>
</dbReference>
<dbReference type="InterPro" id="IPR015421">
    <property type="entry name" value="PyrdxlP-dep_Trfase_major"/>
</dbReference>
<dbReference type="InterPro" id="IPR015422">
    <property type="entry name" value="PyrdxlP-dep_Trfase_small"/>
</dbReference>
<dbReference type="InterPro" id="IPR001085">
    <property type="entry name" value="Ser_HO-MeTrfase"/>
</dbReference>
<dbReference type="InterPro" id="IPR049943">
    <property type="entry name" value="Ser_HO-MeTrfase-like"/>
</dbReference>
<dbReference type="InterPro" id="IPR019798">
    <property type="entry name" value="Ser_HO-MeTrfase_PLP_BS"/>
</dbReference>
<dbReference type="InterPro" id="IPR039429">
    <property type="entry name" value="SHMT-like_dom"/>
</dbReference>
<dbReference type="NCBIfam" id="NF000586">
    <property type="entry name" value="PRK00011.1"/>
    <property type="match status" value="1"/>
</dbReference>
<dbReference type="NCBIfam" id="NF010094">
    <property type="entry name" value="PRK13580.1"/>
    <property type="match status" value="1"/>
</dbReference>
<dbReference type="PANTHER" id="PTHR11680">
    <property type="entry name" value="SERINE HYDROXYMETHYLTRANSFERASE"/>
    <property type="match status" value="1"/>
</dbReference>
<dbReference type="PANTHER" id="PTHR11680:SF35">
    <property type="entry name" value="SERINE HYDROXYMETHYLTRANSFERASE 1"/>
    <property type="match status" value="1"/>
</dbReference>
<dbReference type="Pfam" id="PF00464">
    <property type="entry name" value="SHMT"/>
    <property type="match status" value="2"/>
</dbReference>
<dbReference type="PIRSF" id="PIRSF000412">
    <property type="entry name" value="SHMT"/>
    <property type="match status" value="1"/>
</dbReference>
<dbReference type="SUPFAM" id="SSF53383">
    <property type="entry name" value="PLP-dependent transferases"/>
    <property type="match status" value="1"/>
</dbReference>
<dbReference type="PROSITE" id="PS00096">
    <property type="entry name" value="SHMT"/>
    <property type="match status" value="1"/>
</dbReference>
<keyword id="KW-0028">Amino-acid biosynthesis</keyword>
<keyword id="KW-0963">Cytoplasm</keyword>
<keyword id="KW-0554">One-carbon metabolism</keyword>
<keyword id="KW-0663">Pyridoxal phosphate</keyword>
<keyword id="KW-0808">Transferase</keyword>
<proteinExistence type="inferred from homology"/>
<reference key="1">
    <citation type="journal article" date="2000" name="Nucleic Acids Res.">
        <title>Genome sequences of Chlamydia trachomatis MoPn and Chlamydia pneumoniae AR39.</title>
        <authorList>
            <person name="Read T.D."/>
            <person name="Brunham R.C."/>
            <person name="Shen C."/>
            <person name="Gill S.R."/>
            <person name="Heidelberg J.F."/>
            <person name="White O."/>
            <person name="Hickey E.K."/>
            <person name="Peterson J.D."/>
            <person name="Utterback T.R."/>
            <person name="Berry K.J."/>
            <person name="Bass S."/>
            <person name="Linher K.D."/>
            <person name="Weidman J.F."/>
            <person name="Khouri H.M."/>
            <person name="Craven B."/>
            <person name="Bowman C."/>
            <person name="Dodson R.J."/>
            <person name="Gwinn M.L."/>
            <person name="Nelson W.C."/>
            <person name="DeBoy R.T."/>
            <person name="Kolonay J.F."/>
            <person name="McClarty G."/>
            <person name="Salzberg S.L."/>
            <person name="Eisen J.A."/>
            <person name="Fraser C.M."/>
        </authorList>
    </citation>
    <scope>NUCLEOTIDE SEQUENCE [LARGE SCALE GENOMIC DNA]</scope>
    <source>
        <strain>MoPn / Nigg</strain>
    </source>
</reference>
<gene>
    <name evidence="1" type="primary">glyA</name>
    <name type="ordered locus">TC_0716</name>
</gene>
<protein>
    <recommendedName>
        <fullName evidence="1">Serine hydroxymethyltransferase</fullName>
        <shortName evidence="1">SHMT</shortName>
        <shortName evidence="1">Serine methylase</shortName>
        <ecNumber evidence="1">2.1.2.1</ecNumber>
    </recommendedName>
</protein>
<accession>Q9PJW0</accession>
<feature type="chain" id="PRO_0000113558" description="Serine hydroxymethyltransferase">
    <location>
        <begin position="1"/>
        <end position="497"/>
    </location>
</feature>
<feature type="binding site" evidence="1">
    <location>
        <position position="176"/>
    </location>
    <ligand>
        <name>(6S)-5,6,7,8-tetrahydrofolate</name>
        <dbReference type="ChEBI" id="CHEBI:57453"/>
    </ligand>
</feature>
<feature type="binding site" evidence="1">
    <location>
        <begin position="180"/>
        <end position="182"/>
    </location>
    <ligand>
        <name>(6S)-5,6,7,8-tetrahydrofolate</name>
        <dbReference type="ChEBI" id="CHEBI:57453"/>
    </ligand>
</feature>
<feature type="site" description="Plays an important role in substrate specificity" evidence="1">
    <location>
        <position position="288"/>
    </location>
</feature>
<feature type="modified residue" description="N6-(pyridoxal phosphate)lysine" evidence="1">
    <location>
        <position position="289"/>
    </location>
</feature>
<name>GLYA_CHLMU</name>